<protein>
    <recommendedName>
        <fullName evidence="1">Serine hydroxymethyltransferase</fullName>
        <shortName evidence="1">SHMT</shortName>
        <shortName evidence="1">Serine methylase</shortName>
        <ecNumber evidence="1">2.1.2.1</ecNumber>
    </recommendedName>
</protein>
<reference key="1">
    <citation type="submission" date="2009-07" db="EMBL/GenBank/DDBJ databases">
        <title>Complete sequence of Geobacter sp. M21.</title>
        <authorList>
            <consortium name="US DOE Joint Genome Institute"/>
            <person name="Lucas S."/>
            <person name="Copeland A."/>
            <person name="Lapidus A."/>
            <person name="Glavina del Rio T."/>
            <person name="Dalin E."/>
            <person name="Tice H."/>
            <person name="Bruce D."/>
            <person name="Goodwin L."/>
            <person name="Pitluck S."/>
            <person name="Saunders E."/>
            <person name="Brettin T."/>
            <person name="Detter J.C."/>
            <person name="Han C."/>
            <person name="Larimer F."/>
            <person name="Land M."/>
            <person name="Hauser L."/>
            <person name="Kyrpides N."/>
            <person name="Ovchinnikova G."/>
            <person name="Lovley D."/>
        </authorList>
    </citation>
    <scope>NUCLEOTIDE SEQUENCE [LARGE SCALE GENOMIC DNA]</scope>
    <source>
        <strain>M21</strain>
    </source>
</reference>
<keyword id="KW-0028">Amino-acid biosynthesis</keyword>
<keyword id="KW-0963">Cytoplasm</keyword>
<keyword id="KW-0554">One-carbon metabolism</keyword>
<keyword id="KW-0663">Pyridoxal phosphate</keyword>
<keyword id="KW-0808">Transferase</keyword>
<feature type="chain" id="PRO_1000202264" description="Serine hydroxymethyltransferase">
    <location>
        <begin position="1"/>
        <end position="415"/>
    </location>
</feature>
<feature type="binding site" evidence="1">
    <location>
        <position position="117"/>
    </location>
    <ligand>
        <name>(6S)-5,6,7,8-tetrahydrofolate</name>
        <dbReference type="ChEBI" id="CHEBI:57453"/>
    </ligand>
</feature>
<feature type="binding site" evidence="1">
    <location>
        <begin position="121"/>
        <end position="123"/>
    </location>
    <ligand>
        <name>(6S)-5,6,7,8-tetrahydrofolate</name>
        <dbReference type="ChEBI" id="CHEBI:57453"/>
    </ligand>
</feature>
<feature type="binding site" evidence="1">
    <location>
        <begin position="349"/>
        <end position="351"/>
    </location>
    <ligand>
        <name>(6S)-5,6,7,8-tetrahydrofolate</name>
        <dbReference type="ChEBI" id="CHEBI:57453"/>
    </ligand>
</feature>
<feature type="site" description="Plays an important role in substrate specificity" evidence="1">
    <location>
        <position position="225"/>
    </location>
</feature>
<feature type="modified residue" description="N6-(pyridoxal phosphate)lysine" evidence="1">
    <location>
        <position position="226"/>
    </location>
</feature>
<sequence>MSVLETFDPAVAEVIRHETERQEYNLELIASENFVSPAVLEAQGSVLTNKYAEGYPGKRYYGGCHCVDVVENLAIDRAKELFGADHVNVQPHSGSQANMAVYFSVLKPGDTVLGMNLAHGGHLTHGSPVNFSGKLFNIVPYGVSKETQTIDYEETERLALEHKPKMIVVGASAYPRIIDFEAFRRIADKVGAVVMVDMAHIAGLVAAGLHPSPVPYAEFVTTTTHKTLRGPRGGMIMCREEWAKTLNSNIFPGIQGGPLMHVIAAKAVAFKEALTPEFKKYQEQIVKNAKALAEGLTKRGFKLTSGGTDNHLMLVDLSQTELTGKVAEEALDRAGITVNKNGIPFDTRSPFITSGIRIGTPAATSHGLKEAEMEQVAGFIADVLGNVTDEAKLAAVKTQVNALMKRFPMYADRLA</sequence>
<evidence type="ECO:0000255" key="1">
    <source>
        <dbReference type="HAMAP-Rule" id="MF_00051"/>
    </source>
</evidence>
<comment type="function">
    <text evidence="1">Catalyzes the reversible interconversion of serine and glycine with tetrahydrofolate (THF) serving as the one-carbon carrier. This reaction serves as the major source of one-carbon groups required for the biosynthesis of purines, thymidylate, methionine, and other important biomolecules. Also exhibits THF-independent aldolase activity toward beta-hydroxyamino acids, producing glycine and aldehydes, via a retro-aldol mechanism.</text>
</comment>
<comment type="catalytic activity">
    <reaction evidence="1">
        <text>(6R)-5,10-methylene-5,6,7,8-tetrahydrofolate + glycine + H2O = (6S)-5,6,7,8-tetrahydrofolate + L-serine</text>
        <dbReference type="Rhea" id="RHEA:15481"/>
        <dbReference type="ChEBI" id="CHEBI:15377"/>
        <dbReference type="ChEBI" id="CHEBI:15636"/>
        <dbReference type="ChEBI" id="CHEBI:33384"/>
        <dbReference type="ChEBI" id="CHEBI:57305"/>
        <dbReference type="ChEBI" id="CHEBI:57453"/>
        <dbReference type="EC" id="2.1.2.1"/>
    </reaction>
</comment>
<comment type="cofactor">
    <cofactor evidence="1">
        <name>pyridoxal 5'-phosphate</name>
        <dbReference type="ChEBI" id="CHEBI:597326"/>
    </cofactor>
</comment>
<comment type="pathway">
    <text evidence="1">One-carbon metabolism; tetrahydrofolate interconversion.</text>
</comment>
<comment type="pathway">
    <text evidence="1">Amino-acid biosynthesis; glycine biosynthesis; glycine from L-serine: step 1/1.</text>
</comment>
<comment type="subunit">
    <text evidence="1">Homodimer.</text>
</comment>
<comment type="subcellular location">
    <subcellularLocation>
        <location evidence="1">Cytoplasm</location>
    </subcellularLocation>
</comment>
<comment type="similarity">
    <text evidence="1">Belongs to the SHMT family.</text>
</comment>
<accession>C6E348</accession>
<proteinExistence type="inferred from homology"/>
<dbReference type="EC" id="2.1.2.1" evidence="1"/>
<dbReference type="EMBL" id="CP001661">
    <property type="protein sequence ID" value="ACT17221.1"/>
    <property type="molecule type" value="Genomic_DNA"/>
</dbReference>
<dbReference type="SMR" id="C6E348"/>
<dbReference type="STRING" id="443144.GM21_1160"/>
<dbReference type="KEGG" id="gem:GM21_1160"/>
<dbReference type="eggNOG" id="COG0112">
    <property type="taxonomic scope" value="Bacteria"/>
</dbReference>
<dbReference type="HOGENOM" id="CLU_022477_2_1_7"/>
<dbReference type="OrthoDB" id="9803846at2"/>
<dbReference type="UniPathway" id="UPA00193"/>
<dbReference type="UniPathway" id="UPA00288">
    <property type="reaction ID" value="UER01023"/>
</dbReference>
<dbReference type="GO" id="GO:0005829">
    <property type="term" value="C:cytosol"/>
    <property type="evidence" value="ECO:0007669"/>
    <property type="project" value="TreeGrafter"/>
</dbReference>
<dbReference type="GO" id="GO:0004372">
    <property type="term" value="F:glycine hydroxymethyltransferase activity"/>
    <property type="evidence" value="ECO:0007669"/>
    <property type="project" value="UniProtKB-UniRule"/>
</dbReference>
<dbReference type="GO" id="GO:0030170">
    <property type="term" value="F:pyridoxal phosphate binding"/>
    <property type="evidence" value="ECO:0007669"/>
    <property type="project" value="UniProtKB-UniRule"/>
</dbReference>
<dbReference type="GO" id="GO:0019264">
    <property type="term" value="P:glycine biosynthetic process from serine"/>
    <property type="evidence" value="ECO:0007669"/>
    <property type="project" value="UniProtKB-UniRule"/>
</dbReference>
<dbReference type="GO" id="GO:0035999">
    <property type="term" value="P:tetrahydrofolate interconversion"/>
    <property type="evidence" value="ECO:0007669"/>
    <property type="project" value="UniProtKB-UniRule"/>
</dbReference>
<dbReference type="CDD" id="cd00378">
    <property type="entry name" value="SHMT"/>
    <property type="match status" value="1"/>
</dbReference>
<dbReference type="FunFam" id="3.40.640.10:FF:000001">
    <property type="entry name" value="Serine hydroxymethyltransferase"/>
    <property type="match status" value="1"/>
</dbReference>
<dbReference type="FunFam" id="3.90.1150.10:FF:000003">
    <property type="entry name" value="Serine hydroxymethyltransferase"/>
    <property type="match status" value="1"/>
</dbReference>
<dbReference type="Gene3D" id="3.90.1150.10">
    <property type="entry name" value="Aspartate Aminotransferase, domain 1"/>
    <property type="match status" value="1"/>
</dbReference>
<dbReference type="Gene3D" id="3.40.640.10">
    <property type="entry name" value="Type I PLP-dependent aspartate aminotransferase-like (Major domain)"/>
    <property type="match status" value="1"/>
</dbReference>
<dbReference type="HAMAP" id="MF_00051">
    <property type="entry name" value="SHMT"/>
    <property type="match status" value="1"/>
</dbReference>
<dbReference type="InterPro" id="IPR015424">
    <property type="entry name" value="PyrdxlP-dep_Trfase"/>
</dbReference>
<dbReference type="InterPro" id="IPR015421">
    <property type="entry name" value="PyrdxlP-dep_Trfase_major"/>
</dbReference>
<dbReference type="InterPro" id="IPR015422">
    <property type="entry name" value="PyrdxlP-dep_Trfase_small"/>
</dbReference>
<dbReference type="InterPro" id="IPR001085">
    <property type="entry name" value="Ser_HO-MeTrfase"/>
</dbReference>
<dbReference type="InterPro" id="IPR049943">
    <property type="entry name" value="Ser_HO-MeTrfase-like"/>
</dbReference>
<dbReference type="InterPro" id="IPR019798">
    <property type="entry name" value="Ser_HO-MeTrfase_PLP_BS"/>
</dbReference>
<dbReference type="InterPro" id="IPR039429">
    <property type="entry name" value="SHMT-like_dom"/>
</dbReference>
<dbReference type="NCBIfam" id="NF000586">
    <property type="entry name" value="PRK00011.1"/>
    <property type="match status" value="1"/>
</dbReference>
<dbReference type="PANTHER" id="PTHR11680">
    <property type="entry name" value="SERINE HYDROXYMETHYLTRANSFERASE"/>
    <property type="match status" value="1"/>
</dbReference>
<dbReference type="PANTHER" id="PTHR11680:SF50">
    <property type="entry name" value="SERINE HYDROXYMETHYLTRANSFERASE"/>
    <property type="match status" value="1"/>
</dbReference>
<dbReference type="Pfam" id="PF00464">
    <property type="entry name" value="SHMT"/>
    <property type="match status" value="1"/>
</dbReference>
<dbReference type="PIRSF" id="PIRSF000412">
    <property type="entry name" value="SHMT"/>
    <property type="match status" value="1"/>
</dbReference>
<dbReference type="SUPFAM" id="SSF53383">
    <property type="entry name" value="PLP-dependent transferases"/>
    <property type="match status" value="1"/>
</dbReference>
<dbReference type="PROSITE" id="PS00096">
    <property type="entry name" value="SHMT"/>
    <property type="match status" value="1"/>
</dbReference>
<gene>
    <name evidence="1" type="primary">glyA</name>
    <name type="ordered locus">GM21_1160</name>
</gene>
<organism>
    <name type="scientific">Geobacter sp. (strain M21)</name>
    <dbReference type="NCBI Taxonomy" id="443144"/>
    <lineage>
        <taxon>Bacteria</taxon>
        <taxon>Pseudomonadati</taxon>
        <taxon>Thermodesulfobacteriota</taxon>
        <taxon>Desulfuromonadia</taxon>
        <taxon>Geobacterales</taxon>
        <taxon>Geobacteraceae</taxon>
        <taxon>Geobacter</taxon>
    </lineage>
</organism>
<name>GLYA_GEOSM</name>